<evidence type="ECO:0000255" key="1">
    <source>
        <dbReference type="HAMAP-Rule" id="MF_00374"/>
    </source>
</evidence>
<evidence type="ECO:0000305" key="2"/>
<feature type="chain" id="PRO_1000059962" description="Large ribosomal subunit protein uL29">
    <location>
        <begin position="1"/>
        <end position="67"/>
    </location>
</feature>
<sequence length="67" mass="7896">MKTKEMRDMTNAELDQRLAELKGELFNLRFQLATGQLENPLRIRNVRKDIARAKTIIRENELKQARA</sequence>
<name>RL29_ALKOO</name>
<gene>
    <name evidence="1" type="primary">rpmC</name>
    <name type="ordered locus">Clos_0500</name>
</gene>
<organism>
    <name type="scientific">Alkaliphilus oremlandii (strain OhILAs)</name>
    <name type="common">Clostridium oremlandii (strain OhILAs)</name>
    <dbReference type="NCBI Taxonomy" id="350688"/>
    <lineage>
        <taxon>Bacteria</taxon>
        <taxon>Bacillati</taxon>
        <taxon>Bacillota</taxon>
        <taxon>Clostridia</taxon>
        <taxon>Peptostreptococcales</taxon>
        <taxon>Natronincolaceae</taxon>
        <taxon>Alkaliphilus</taxon>
    </lineage>
</organism>
<protein>
    <recommendedName>
        <fullName evidence="1">Large ribosomal subunit protein uL29</fullName>
    </recommendedName>
    <alternativeName>
        <fullName evidence="2">50S ribosomal protein L29</fullName>
    </alternativeName>
</protein>
<comment type="similarity">
    <text evidence="1">Belongs to the universal ribosomal protein uL29 family.</text>
</comment>
<dbReference type="EMBL" id="CP000853">
    <property type="protein sequence ID" value="ABW18062.1"/>
    <property type="molecule type" value="Genomic_DNA"/>
</dbReference>
<dbReference type="RefSeq" id="WP_012158376.1">
    <property type="nucleotide sequence ID" value="NC_009922.1"/>
</dbReference>
<dbReference type="SMR" id="A8MLE8"/>
<dbReference type="STRING" id="350688.Clos_0500"/>
<dbReference type="KEGG" id="aoe:Clos_0500"/>
<dbReference type="eggNOG" id="COG0255">
    <property type="taxonomic scope" value="Bacteria"/>
</dbReference>
<dbReference type="HOGENOM" id="CLU_158491_5_2_9"/>
<dbReference type="OrthoDB" id="9815192at2"/>
<dbReference type="Proteomes" id="UP000000269">
    <property type="component" value="Chromosome"/>
</dbReference>
<dbReference type="GO" id="GO:0022625">
    <property type="term" value="C:cytosolic large ribosomal subunit"/>
    <property type="evidence" value="ECO:0007669"/>
    <property type="project" value="TreeGrafter"/>
</dbReference>
<dbReference type="GO" id="GO:0003735">
    <property type="term" value="F:structural constituent of ribosome"/>
    <property type="evidence" value="ECO:0007669"/>
    <property type="project" value="InterPro"/>
</dbReference>
<dbReference type="GO" id="GO:0006412">
    <property type="term" value="P:translation"/>
    <property type="evidence" value="ECO:0007669"/>
    <property type="project" value="UniProtKB-UniRule"/>
</dbReference>
<dbReference type="CDD" id="cd00427">
    <property type="entry name" value="Ribosomal_L29_HIP"/>
    <property type="match status" value="1"/>
</dbReference>
<dbReference type="FunFam" id="1.10.287.310:FF:000001">
    <property type="entry name" value="50S ribosomal protein L29"/>
    <property type="match status" value="1"/>
</dbReference>
<dbReference type="Gene3D" id="1.10.287.310">
    <property type="match status" value="1"/>
</dbReference>
<dbReference type="HAMAP" id="MF_00374">
    <property type="entry name" value="Ribosomal_uL29"/>
    <property type="match status" value="1"/>
</dbReference>
<dbReference type="InterPro" id="IPR050063">
    <property type="entry name" value="Ribosomal_protein_uL29"/>
</dbReference>
<dbReference type="InterPro" id="IPR001854">
    <property type="entry name" value="Ribosomal_uL29"/>
</dbReference>
<dbReference type="InterPro" id="IPR018254">
    <property type="entry name" value="Ribosomal_uL29_CS"/>
</dbReference>
<dbReference type="InterPro" id="IPR036049">
    <property type="entry name" value="Ribosomal_uL29_sf"/>
</dbReference>
<dbReference type="NCBIfam" id="TIGR00012">
    <property type="entry name" value="L29"/>
    <property type="match status" value="1"/>
</dbReference>
<dbReference type="PANTHER" id="PTHR10916">
    <property type="entry name" value="60S RIBOSOMAL PROTEIN L35/50S RIBOSOMAL PROTEIN L29"/>
    <property type="match status" value="1"/>
</dbReference>
<dbReference type="PANTHER" id="PTHR10916:SF0">
    <property type="entry name" value="LARGE RIBOSOMAL SUBUNIT PROTEIN UL29C"/>
    <property type="match status" value="1"/>
</dbReference>
<dbReference type="Pfam" id="PF00831">
    <property type="entry name" value="Ribosomal_L29"/>
    <property type="match status" value="1"/>
</dbReference>
<dbReference type="SUPFAM" id="SSF46561">
    <property type="entry name" value="Ribosomal protein L29 (L29p)"/>
    <property type="match status" value="1"/>
</dbReference>
<dbReference type="PROSITE" id="PS00579">
    <property type="entry name" value="RIBOSOMAL_L29"/>
    <property type="match status" value="1"/>
</dbReference>
<reference key="1">
    <citation type="submission" date="2007-10" db="EMBL/GenBank/DDBJ databases">
        <title>Complete genome of Alkaliphilus oremlandii OhILAs.</title>
        <authorList>
            <person name="Copeland A."/>
            <person name="Lucas S."/>
            <person name="Lapidus A."/>
            <person name="Barry K."/>
            <person name="Detter J.C."/>
            <person name="Glavina del Rio T."/>
            <person name="Hammon N."/>
            <person name="Israni S."/>
            <person name="Dalin E."/>
            <person name="Tice H."/>
            <person name="Pitluck S."/>
            <person name="Chain P."/>
            <person name="Malfatti S."/>
            <person name="Shin M."/>
            <person name="Vergez L."/>
            <person name="Schmutz J."/>
            <person name="Larimer F."/>
            <person name="Land M."/>
            <person name="Hauser L."/>
            <person name="Kyrpides N."/>
            <person name="Mikhailova N."/>
            <person name="Stolz J.F."/>
            <person name="Dawson A."/>
            <person name="Fisher E."/>
            <person name="Crable B."/>
            <person name="Perera E."/>
            <person name="Lisak J."/>
            <person name="Ranganathan M."/>
            <person name="Basu P."/>
            <person name="Richardson P."/>
        </authorList>
    </citation>
    <scope>NUCLEOTIDE SEQUENCE [LARGE SCALE GENOMIC DNA]</scope>
    <source>
        <strain>OhILAs</strain>
    </source>
</reference>
<proteinExistence type="inferred from homology"/>
<accession>A8MLE8</accession>
<keyword id="KW-1185">Reference proteome</keyword>
<keyword id="KW-0687">Ribonucleoprotein</keyword>
<keyword id="KW-0689">Ribosomal protein</keyword>